<gene>
    <name type="primary">SLY41</name>
    <name type="ordered locus">YOR307C</name>
    <name type="ORF">O5663</name>
</gene>
<accession>P22215</accession>
<accession>D6W307</accession>
<proteinExistence type="evidence at protein level"/>
<evidence type="ECO:0000255" key="1"/>
<evidence type="ECO:0000269" key="2">
    <source>
    </source>
</evidence>
<evidence type="ECO:0000305" key="3"/>
<keyword id="KW-0472">Membrane</keyword>
<keyword id="KW-1185">Reference proteome</keyword>
<keyword id="KW-0812">Transmembrane</keyword>
<keyword id="KW-1133">Transmembrane helix</keyword>
<keyword id="KW-0813">Transport</keyword>
<dbReference type="EMBL" id="X54238">
    <property type="protein sequence ID" value="CAA38144.1"/>
    <property type="molecule type" value="Genomic_DNA"/>
</dbReference>
<dbReference type="EMBL" id="X90565">
    <property type="protein sequence ID" value="CAA62161.1"/>
    <property type="molecule type" value="Genomic_DNA"/>
</dbReference>
<dbReference type="EMBL" id="Z75215">
    <property type="protein sequence ID" value="CAA99627.1"/>
    <property type="molecule type" value="Genomic_DNA"/>
</dbReference>
<dbReference type="EMBL" id="BK006948">
    <property type="protein sequence ID" value="DAA11073.1"/>
    <property type="molecule type" value="Genomic_DNA"/>
</dbReference>
<dbReference type="PIR" id="S58318">
    <property type="entry name" value="S58318"/>
</dbReference>
<dbReference type="RefSeq" id="NP_014952.1">
    <property type="nucleotide sequence ID" value="NM_001183727.1"/>
</dbReference>
<dbReference type="SMR" id="P22215"/>
<dbReference type="BioGRID" id="34696">
    <property type="interactions" value="82"/>
</dbReference>
<dbReference type="DIP" id="DIP-2919N"/>
<dbReference type="FunCoup" id="P22215">
    <property type="interactions" value="668"/>
</dbReference>
<dbReference type="IntAct" id="P22215">
    <property type="interactions" value="10"/>
</dbReference>
<dbReference type="MINT" id="P22215"/>
<dbReference type="STRING" id="4932.YOR307C"/>
<dbReference type="TCDB" id="2.A.7.9.4">
    <property type="family name" value="the drug/metabolite transporter (dmt) superfamily"/>
</dbReference>
<dbReference type="iPTMnet" id="P22215"/>
<dbReference type="PaxDb" id="4932-YOR307C"/>
<dbReference type="PeptideAtlas" id="P22215"/>
<dbReference type="EnsemblFungi" id="YOR307C_mRNA">
    <property type="protein sequence ID" value="YOR307C"/>
    <property type="gene ID" value="YOR307C"/>
</dbReference>
<dbReference type="GeneID" id="854484"/>
<dbReference type="KEGG" id="sce:YOR307C"/>
<dbReference type="AGR" id="SGD:S000005834"/>
<dbReference type="SGD" id="S000005834">
    <property type="gene designation" value="SLY41"/>
</dbReference>
<dbReference type="VEuPathDB" id="FungiDB:YOR307C"/>
<dbReference type="eggNOG" id="KOG1441">
    <property type="taxonomic scope" value="Eukaryota"/>
</dbReference>
<dbReference type="GeneTree" id="ENSGT00940000159007"/>
<dbReference type="HOGENOM" id="CLU_019048_4_1_1"/>
<dbReference type="InParanoid" id="P22215"/>
<dbReference type="OMA" id="FWYTVSS"/>
<dbReference type="OrthoDB" id="1588579at2759"/>
<dbReference type="BioCyc" id="YEAST:G3O-33791-MONOMER"/>
<dbReference type="BioGRID-ORCS" id="854484">
    <property type="hits" value="1 hit in 10 CRISPR screens"/>
</dbReference>
<dbReference type="PRO" id="PR:P22215"/>
<dbReference type="Proteomes" id="UP000002311">
    <property type="component" value="Chromosome XV"/>
</dbReference>
<dbReference type="RNAct" id="P22215">
    <property type="molecule type" value="protein"/>
</dbReference>
<dbReference type="GO" id="GO:0005783">
    <property type="term" value="C:endoplasmic reticulum"/>
    <property type="evidence" value="ECO:0000314"/>
    <property type="project" value="SGD"/>
</dbReference>
<dbReference type="GO" id="GO:0005794">
    <property type="term" value="C:Golgi apparatus"/>
    <property type="evidence" value="ECO:0000318"/>
    <property type="project" value="GO_Central"/>
</dbReference>
<dbReference type="GO" id="GO:0016020">
    <property type="term" value="C:membrane"/>
    <property type="evidence" value="ECO:0007669"/>
    <property type="project" value="UniProtKB-SubCell"/>
</dbReference>
<dbReference type="GO" id="GO:0015297">
    <property type="term" value="F:antiporter activity"/>
    <property type="evidence" value="ECO:0000318"/>
    <property type="project" value="GO_Central"/>
</dbReference>
<dbReference type="GO" id="GO:0089721">
    <property type="term" value="F:phosphoenolpyruvate transmembrane transporter activity"/>
    <property type="evidence" value="ECO:0000318"/>
    <property type="project" value="GO_Central"/>
</dbReference>
<dbReference type="GO" id="GO:0006888">
    <property type="term" value="P:endoplasmic reticulum to Golgi vesicle-mediated transport"/>
    <property type="evidence" value="ECO:0000316"/>
    <property type="project" value="SGD"/>
</dbReference>
<dbReference type="GO" id="GO:1990536">
    <property type="term" value="P:phosphoenolpyruvate transmembrane import into Golgi lumen"/>
    <property type="evidence" value="ECO:0000318"/>
    <property type="project" value="GO_Central"/>
</dbReference>
<dbReference type="InterPro" id="IPR004853">
    <property type="entry name" value="Sugar_P_trans_dom"/>
</dbReference>
<dbReference type="InterPro" id="IPR004696">
    <property type="entry name" value="Tpt_PEP_transl"/>
</dbReference>
<dbReference type="InterPro" id="IPR050186">
    <property type="entry name" value="TPT_transporter"/>
</dbReference>
<dbReference type="NCBIfam" id="TIGR00817">
    <property type="entry name" value="tpt"/>
    <property type="match status" value="1"/>
</dbReference>
<dbReference type="PANTHER" id="PTHR11132">
    <property type="entry name" value="SOLUTE CARRIER FAMILY 35"/>
    <property type="match status" value="1"/>
</dbReference>
<dbReference type="Pfam" id="PF03151">
    <property type="entry name" value="TPT"/>
    <property type="match status" value="1"/>
</dbReference>
<reference key="1">
    <citation type="journal article" date="1991" name="Mol. Cell. Biol.">
        <title>Identification and structure of four yeast genes (SLY) that are able to suppress the functional loss of YPT1, a member of the RAS superfamily.</title>
        <authorList>
            <person name="Dascher C."/>
            <person name="Ossig R."/>
            <person name="Gallwitz D."/>
            <person name="Schmitt H.D."/>
        </authorList>
    </citation>
    <scope>NUCLEOTIDE SEQUENCE [GENOMIC DNA]</scope>
</reference>
<reference key="2">
    <citation type="journal article" date="1996" name="Yeast">
        <title>Sequencing of a 35.71 kb DNA segment on the right arm of yeast chromosome XV reveals regions of similarity to chromosomes I and XIII.</title>
        <authorList>
            <person name="Pearson B.M."/>
            <person name="Hernando Y."/>
            <person name="Payne J."/>
            <person name="Wolf S.S."/>
            <person name="Kalogeropoulos A."/>
            <person name="Schweizer M."/>
        </authorList>
    </citation>
    <scope>NUCLEOTIDE SEQUENCE [GENOMIC DNA]</scope>
    <source>
        <strain>ATCC 96604 / S288c / FY1679</strain>
    </source>
</reference>
<reference key="3">
    <citation type="journal article" date="1997" name="Yeast">
        <title>Sequence and analysis of a 36.2 kb fragment from the right arm of yeast chromosome XV reveals 19 open reading frames including SNF2 (5' end), CPA1, SLY41, a putative transport ATPase, a putative ribosomal protein and an SNF2 homologue.</title>
        <authorList>
            <person name="Poirey R."/>
            <person name="Cziepluch C."/>
            <person name="Tobiasch E."/>
            <person name="Pujol A."/>
            <person name="Kordes E."/>
            <person name="Jauniaux J.-C."/>
        </authorList>
    </citation>
    <scope>NUCLEOTIDE SEQUENCE [GENOMIC DNA]</scope>
    <source>
        <strain>ATCC 96604 / S288c / FY1679</strain>
    </source>
</reference>
<reference key="4">
    <citation type="journal article" date="1997" name="Nature">
        <title>The nucleotide sequence of Saccharomyces cerevisiae chromosome XV.</title>
        <authorList>
            <person name="Dujon B."/>
            <person name="Albermann K."/>
            <person name="Aldea M."/>
            <person name="Alexandraki D."/>
            <person name="Ansorge W."/>
            <person name="Arino J."/>
            <person name="Benes V."/>
            <person name="Bohn C."/>
            <person name="Bolotin-Fukuhara M."/>
            <person name="Bordonne R."/>
            <person name="Boyer J."/>
            <person name="Camasses A."/>
            <person name="Casamayor A."/>
            <person name="Casas C."/>
            <person name="Cheret G."/>
            <person name="Cziepluch C."/>
            <person name="Daignan-Fornier B."/>
            <person name="Dang V.-D."/>
            <person name="de Haan M."/>
            <person name="Delius H."/>
            <person name="Durand P."/>
            <person name="Fairhead C."/>
            <person name="Feldmann H."/>
            <person name="Gaillon L."/>
            <person name="Galisson F."/>
            <person name="Gamo F.-J."/>
            <person name="Gancedo C."/>
            <person name="Goffeau A."/>
            <person name="Goulding S.E."/>
            <person name="Grivell L.A."/>
            <person name="Habbig B."/>
            <person name="Hand N.J."/>
            <person name="Hani J."/>
            <person name="Hattenhorst U."/>
            <person name="Hebling U."/>
            <person name="Hernando Y."/>
            <person name="Herrero E."/>
            <person name="Heumann K."/>
            <person name="Hiesel R."/>
            <person name="Hilger F."/>
            <person name="Hofmann B."/>
            <person name="Hollenberg C.P."/>
            <person name="Hughes B."/>
            <person name="Jauniaux J.-C."/>
            <person name="Kalogeropoulos A."/>
            <person name="Katsoulou C."/>
            <person name="Kordes E."/>
            <person name="Lafuente M.J."/>
            <person name="Landt O."/>
            <person name="Louis E.J."/>
            <person name="Maarse A.C."/>
            <person name="Madania A."/>
            <person name="Mannhaupt G."/>
            <person name="Marck C."/>
            <person name="Martin R.P."/>
            <person name="Mewes H.-W."/>
            <person name="Michaux G."/>
            <person name="Paces V."/>
            <person name="Parle-McDermott A.G."/>
            <person name="Pearson B.M."/>
            <person name="Perrin A."/>
            <person name="Pettersson B."/>
            <person name="Poch O."/>
            <person name="Pohl T.M."/>
            <person name="Poirey R."/>
            <person name="Portetelle D."/>
            <person name="Pujol A."/>
            <person name="Purnelle B."/>
            <person name="Ramezani Rad M."/>
            <person name="Rechmann S."/>
            <person name="Schwager C."/>
            <person name="Schweizer M."/>
            <person name="Sor F."/>
            <person name="Sterky F."/>
            <person name="Tarassov I.A."/>
            <person name="Teodoru C."/>
            <person name="Tettelin H."/>
            <person name="Thierry A."/>
            <person name="Tobiasch E."/>
            <person name="Tzermia M."/>
            <person name="Uhlen M."/>
            <person name="Unseld M."/>
            <person name="Valens M."/>
            <person name="Vandenbol M."/>
            <person name="Vetter I."/>
            <person name="Vlcek C."/>
            <person name="Voet M."/>
            <person name="Volckaert G."/>
            <person name="Voss H."/>
            <person name="Wambutt R."/>
            <person name="Wedler H."/>
            <person name="Wiemann S."/>
            <person name="Winsor B."/>
            <person name="Wolfe K.H."/>
            <person name="Zollner A."/>
            <person name="Zumstein E."/>
            <person name="Kleine K."/>
        </authorList>
    </citation>
    <scope>NUCLEOTIDE SEQUENCE [LARGE SCALE GENOMIC DNA]</scope>
    <source>
        <strain>ATCC 204508 / S288c</strain>
    </source>
</reference>
<reference key="5">
    <citation type="journal article" date="2014" name="G3 (Bethesda)">
        <title>The reference genome sequence of Saccharomyces cerevisiae: Then and now.</title>
        <authorList>
            <person name="Engel S.R."/>
            <person name="Dietrich F.S."/>
            <person name="Fisk D.G."/>
            <person name="Binkley G."/>
            <person name="Balakrishnan R."/>
            <person name="Costanzo M.C."/>
            <person name="Dwight S.S."/>
            <person name="Hitz B.C."/>
            <person name="Karra K."/>
            <person name="Nash R.S."/>
            <person name="Weng S."/>
            <person name="Wong E.D."/>
            <person name="Lloyd P."/>
            <person name="Skrzypek M.S."/>
            <person name="Miyasato S.R."/>
            <person name="Simison M."/>
            <person name="Cherry J.M."/>
        </authorList>
    </citation>
    <scope>GENOME REANNOTATION</scope>
    <source>
        <strain>ATCC 204508 / S288c</strain>
    </source>
</reference>
<reference key="6">
    <citation type="journal article" date="2003" name="Nature">
        <title>Global analysis of protein expression in yeast.</title>
        <authorList>
            <person name="Ghaemmaghami S."/>
            <person name="Huh W.-K."/>
            <person name="Bower K."/>
            <person name="Howson R.W."/>
            <person name="Belle A."/>
            <person name="Dephoure N."/>
            <person name="O'Shea E.K."/>
            <person name="Weissman J.S."/>
        </authorList>
    </citation>
    <scope>LEVEL OF PROTEIN EXPRESSION [LARGE SCALE ANALYSIS]</scope>
</reference>
<reference key="7">
    <citation type="journal article" date="2006" name="Proc. Natl. Acad. Sci. U.S.A.">
        <title>A global topology map of the Saccharomyces cerevisiae membrane proteome.</title>
        <authorList>
            <person name="Kim H."/>
            <person name="Melen K."/>
            <person name="Oesterberg M."/>
            <person name="von Heijne G."/>
        </authorList>
    </citation>
    <scope>TOPOLOGY [LARGE SCALE ANALYSIS]</scope>
    <source>
        <strain>ATCC 208353 / W303-1A</strain>
    </source>
</reference>
<reference key="8">
    <citation type="journal article" date="2007" name="J. Proteome Res.">
        <title>Large-scale phosphorylation analysis of alpha-factor-arrested Saccharomyces cerevisiae.</title>
        <authorList>
            <person name="Li X."/>
            <person name="Gerber S.A."/>
            <person name="Rudner A.D."/>
            <person name="Beausoleil S.A."/>
            <person name="Haas W."/>
            <person name="Villen J."/>
            <person name="Elias J.E."/>
            <person name="Gygi S.P."/>
        </authorList>
    </citation>
    <scope>IDENTIFICATION BY MASS SPECTROMETRY [LARGE SCALE ANALYSIS]</scope>
    <source>
        <strain>ADR376</strain>
    </source>
</reference>
<reference key="9">
    <citation type="journal article" date="2008" name="Mol. Cell. Proteomics">
        <title>A multidimensional chromatography technology for in-depth phosphoproteome analysis.</title>
        <authorList>
            <person name="Albuquerque C.P."/>
            <person name="Smolka M.B."/>
            <person name="Payne S.H."/>
            <person name="Bafna V."/>
            <person name="Eng J."/>
            <person name="Zhou H."/>
        </authorList>
    </citation>
    <scope>IDENTIFICATION BY MASS SPECTROMETRY [LARGE SCALE ANALYSIS]</scope>
</reference>
<reference key="10">
    <citation type="journal article" date="2009" name="Science">
        <title>Global analysis of Cdk1 substrate phosphorylation sites provides insights into evolution.</title>
        <authorList>
            <person name="Holt L.J."/>
            <person name="Tuch B.B."/>
            <person name="Villen J."/>
            <person name="Johnson A.D."/>
            <person name="Gygi S.P."/>
            <person name="Morgan D.O."/>
        </authorList>
    </citation>
    <scope>IDENTIFICATION BY MASS SPECTROMETRY [LARGE SCALE ANALYSIS]</scope>
</reference>
<reference key="11">
    <citation type="journal article" date="2012" name="Proc. Natl. Acad. Sci. U.S.A.">
        <title>N-terminal acetylome analyses and functional insights of the N-terminal acetyltransferase NatB.</title>
        <authorList>
            <person name="Van Damme P."/>
            <person name="Lasa M."/>
            <person name="Polevoda B."/>
            <person name="Gazquez C."/>
            <person name="Elosegui-Artola A."/>
            <person name="Kim D.S."/>
            <person name="De Juan-Pardo E."/>
            <person name="Demeyer K."/>
            <person name="Hole K."/>
            <person name="Larrea E."/>
            <person name="Timmerman E."/>
            <person name="Prieto J."/>
            <person name="Arnesen T."/>
            <person name="Sherman F."/>
            <person name="Gevaert K."/>
            <person name="Aldabe R."/>
        </authorList>
    </citation>
    <scope>IDENTIFICATION BY MASS SPECTROMETRY [LARGE SCALE ANALYSIS]</scope>
</reference>
<organism>
    <name type="scientific">Saccharomyces cerevisiae (strain ATCC 204508 / S288c)</name>
    <name type="common">Baker's yeast</name>
    <dbReference type="NCBI Taxonomy" id="559292"/>
    <lineage>
        <taxon>Eukaryota</taxon>
        <taxon>Fungi</taxon>
        <taxon>Dikarya</taxon>
        <taxon>Ascomycota</taxon>
        <taxon>Saccharomycotina</taxon>
        <taxon>Saccharomycetes</taxon>
        <taxon>Saccharomycetales</taxon>
        <taxon>Saccharomycetaceae</taxon>
        <taxon>Saccharomyces</taxon>
    </lineage>
</organism>
<name>SLY41_YEAST</name>
<protein>
    <recommendedName>
        <fullName>Uncharacterized transporter SLY41</fullName>
    </recommendedName>
</protein>
<comment type="function">
    <text>Able to suppress the functional loss of YPT1. May form a channel. Protein SLY41 is not essential for cell viability. The SLY41 gene is a multicopy suppressor.</text>
</comment>
<comment type="subcellular location">
    <subcellularLocation>
        <location>Membrane</location>
        <topology>Multi-pass membrane protein</topology>
    </subcellularLocation>
</comment>
<comment type="miscellaneous">
    <text evidence="2">Present with 784 molecules/cell in log phase SD medium.</text>
</comment>
<comment type="similarity">
    <text evidence="3">Belongs to the TPT transporter family.</text>
</comment>
<feature type="chain" id="PRO_0000206785" description="Uncharacterized transporter SLY41">
    <location>
        <begin position="1"/>
        <end position="453"/>
    </location>
</feature>
<feature type="topological domain" description="Cytoplasmic" evidence="1">
    <location>
        <begin position="1"/>
        <end position="110"/>
    </location>
</feature>
<feature type="transmembrane region" description="Helical" evidence="1">
    <location>
        <begin position="111"/>
        <end position="131"/>
    </location>
</feature>
<feature type="topological domain" description="Lumenal" evidence="1">
    <location>
        <begin position="132"/>
        <end position="172"/>
    </location>
</feature>
<feature type="transmembrane region" description="Helical" evidence="1">
    <location>
        <begin position="173"/>
        <end position="193"/>
    </location>
</feature>
<feature type="topological domain" description="Cytoplasmic" evidence="1">
    <location>
        <begin position="194"/>
        <end position="201"/>
    </location>
</feature>
<feature type="transmembrane region" description="Helical" evidence="1">
    <location>
        <begin position="202"/>
        <end position="222"/>
    </location>
</feature>
<feature type="topological domain" description="Lumenal" evidence="1">
    <location>
        <begin position="223"/>
        <end position="234"/>
    </location>
</feature>
<feature type="transmembrane region" description="Helical" evidence="1">
    <location>
        <begin position="235"/>
        <end position="255"/>
    </location>
</feature>
<feature type="topological domain" description="Cytoplasmic" evidence="1">
    <location>
        <begin position="256"/>
        <end position="269"/>
    </location>
</feature>
<feature type="transmembrane region" description="Helical" evidence="1">
    <location>
        <begin position="270"/>
        <end position="290"/>
    </location>
</feature>
<feature type="topological domain" description="Lumenal" evidence="1">
    <location>
        <begin position="291"/>
        <end position="332"/>
    </location>
</feature>
<feature type="transmembrane region" description="Helical" evidence="1">
    <location>
        <begin position="333"/>
        <end position="353"/>
    </location>
</feature>
<feature type="topological domain" description="Cytoplasmic" evidence="1">
    <location>
        <begin position="354"/>
        <end position="371"/>
    </location>
</feature>
<feature type="transmembrane region" description="Helical" evidence="1">
    <location>
        <begin position="372"/>
        <end position="392"/>
    </location>
</feature>
<feature type="topological domain" description="Lumenal" evidence="1">
    <location>
        <begin position="393"/>
        <end position="413"/>
    </location>
</feature>
<feature type="transmembrane region" description="Helical" evidence="1">
    <location>
        <begin position="414"/>
        <end position="434"/>
    </location>
</feature>
<feature type="topological domain" description="Cytoplasmic" evidence="1">
    <location>
        <begin position="435"/>
        <end position="453"/>
    </location>
</feature>
<feature type="sequence conflict" description="In Ref. 1; CAA38144." evidence="3" ref="1">
    <location>
        <position position="34"/>
    </location>
</feature>
<feature type="sequence conflict" description="In Ref. 1; CAA38144." evidence="3" ref="1">
    <original>C</original>
    <variation>S</variation>
    <location>
        <position position="339"/>
    </location>
</feature>
<sequence length="453" mass="50903">MIQTQSTAIKRRNSVHKNLFDPSLYQIPEPPRGGFQHQKKEYSKETFSNQVFGYDITSLKKRFTQLFPSNIQGYLPEVDLRITIICSIWYVTSSISSNLSKAILRTFNHPIALTELQFLVSAVLCVGFASIVNLFRLPRLKHTKFSKALNSFPDGILPEYLDGNFRSSILHKFLVPSKLVLMTTFPMGIFQFIGHITSHKAVSMIPVSLVHSVKALSPIITVGYYKFFEHRYYNSMTYYTLLLLIFGVMTTCWSTHGSKRASDNKSGSSLIGLLFAFISMIIFVAQNIFAKNILTIRRKVGILPSSSTDDVTSKEGQPSLDKTRFSPLQVDKITILFYCSCIGFSLTLLPFLTGELMHGGSVINDLTLETVALVAIHGIAHFFQAMLAFQLIGLLSSINYSVANIMKRIVVISVALFWETKLNFFQVFGVILTIAGLYGYDKWGLSKKDGRQA</sequence>